<name>RISB_CARHZ</name>
<protein>
    <recommendedName>
        <fullName evidence="1">6,7-dimethyl-8-ribityllumazine synthase</fullName>
        <shortName evidence="1">DMRL synthase</shortName>
        <shortName evidence="1">LS</shortName>
        <shortName evidence="1">Lumazine synthase</shortName>
        <ecNumber evidence="1">2.5.1.78</ecNumber>
    </recommendedName>
</protein>
<keyword id="KW-1185">Reference proteome</keyword>
<keyword id="KW-0686">Riboflavin biosynthesis</keyword>
<keyword id="KW-0808">Transferase</keyword>
<reference key="1">
    <citation type="journal article" date="2005" name="PLoS Genet.">
        <title>Life in hot carbon monoxide: the complete genome sequence of Carboxydothermus hydrogenoformans Z-2901.</title>
        <authorList>
            <person name="Wu M."/>
            <person name="Ren Q."/>
            <person name="Durkin A.S."/>
            <person name="Daugherty S.C."/>
            <person name="Brinkac L.M."/>
            <person name="Dodson R.J."/>
            <person name="Madupu R."/>
            <person name="Sullivan S.A."/>
            <person name="Kolonay J.F."/>
            <person name="Nelson W.C."/>
            <person name="Tallon L.J."/>
            <person name="Jones K.M."/>
            <person name="Ulrich L.E."/>
            <person name="Gonzalez J.M."/>
            <person name="Zhulin I.B."/>
            <person name="Robb F.T."/>
            <person name="Eisen J.A."/>
        </authorList>
    </citation>
    <scope>NUCLEOTIDE SEQUENCE [LARGE SCALE GENOMIC DNA]</scope>
    <source>
        <strain>ATCC BAA-161 / DSM 6008 / Z-2901</strain>
    </source>
</reference>
<dbReference type="EC" id="2.5.1.78" evidence="1"/>
<dbReference type="EMBL" id="CP000141">
    <property type="protein sequence ID" value="ABB15717.1"/>
    <property type="molecule type" value="Genomic_DNA"/>
</dbReference>
<dbReference type="RefSeq" id="WP_011344379.1">
    <property type="nucleotide sequence ID" value="NC_007503.1"/>
</dbReference>
<dbReference type="SMR" id="Q3AC30"/>
<dbReference type="FunCoup" id="Q3AC30">
    <property type="interactions" value="430"/>
</dbReference>
<dbReference type="STRING" id="246194.CHY_1472"/>
<dbReference type="KEGG" id="chy:CHY_1472"/>
<dbReference type="eggNOG" id="COG0054">
    <property type="taxonomic scope" value="Bacteria"/>
</dbReference>
<dbReference type="HOGENOM" id="CLU_089358_1_1_9"/>
<dbReference type="InParanoid" id="Q3AC30"/>
<dbReference type="OrthoDB" id="9809709at2"/>
<dbReference type="UniPathway" id="UPA00275">
    <property type="reaction ID" value="UER00404"/>
</dbReference>
<dbReference type="Proteomes" id="UP000002706">
    <property type="component" value="Chromosome"/>
</dbReference>
<dbReference type="GO" id="GO:0005829">
    <property type="term" value="C:cytosol"/>
    <property type="evidence" value="ECO:0007669"/>
    <property type="project" value="TreeGrafter"/>
</dbReference>
<dbReference type="GO" id="GO:0009349">
    <property type="term" value="C:riboflavin synthase complex"/>
    <property type="evidence" value="ECO:0007669"/>
    <property type="project" value="InterPro"/>
</dbReference>
<dbReference type="GO" id="GO:0000906">
    <property type="term" value="F:6,7-dimethyl-8-ribityllumazine synthase activity"/>
    <property type="evidence" value="ECO:0007669"/>
    <property type="project" value="UniProtKB-UniRule"/>
</dbReference>
<dbReference type="GO" id="GO:0009231">
    <property type="term" value="P:riboflavin biosynthetic process"/>
    <property type="evidence" value="ECO:0007669"/>
    <property type="project" value="UniProtKB-UniRule"/>
</dbReference>
<dbReference type="CDD" id="cd09209">
    <property type="entry name" value="Lumazine_synthase-I"/>
    <property type="match status" value="1"/>
</dbReference>
<dbReference type="FunFam" id="3.40.50.960:FF:000001">
    <property type="entry name" value="6,7-dimethyl-8-ribityllumazine synthase"/>
    <property type="match status" value="1"/>
</dbReference>
<dbReference type="Gene3D" id="3.40.50.960">
    <property type="entry name" value="Lumazine/riboflavin synthase"/>
    <property type="match status" value="1"/>
</dbReference>
<dbReference type="HAMAP" id="MF_00178">
    <property type="entry name" value="Lumazine_synth"/>
    <property type="match status" value="1"/>
</dbReference>
<dbReference type="InterPro" id="IPR034964">
    <property type="entry name" value="LS"/>
</dbReference>
<dbReference type="InterPro" id="IPR002180">
    <property type="entry name" value="LS/RS"/>
</dbReference>
<dbReference type="InterPro" id="IPR036467">
    <property type="entry name" value="LS/RS_sf"/>
</dbReference>
<dbReference type="NCBIfam" id="TIGR00114">
    <property type="entry name" value="lumazine-synth"/>
    <property type="match status" value="1"/>
</dbReference>
<dbReference type="NCBIfam" id="NF000812">
    <property type="entry name" value="PRK00061.1-4"/>
    <property type="match status" value="1"/>
</dbReference>
<dbReference type="PANTHER" id="PTHR21058:SF0">
    <property type="entry name" value="6,7-DIMETHYL-8-RIBITYLLUMAZINE SYNTHASE"/>
    <property type="match status" value="1"/>
</dbReference>
<dbReference type="PANTHER" id="PTHR21058">
    <property type="entry name" value="6,7-DIMETHYL-8-RIBITYLLUMAZINE SYNTHASE DMRL SYNTHASE LUMAZINE SYNTHASE"/>
    <property type="match status" value="1"/>
</dbReference>
<dbReference type="Pfam" id="PF00885">
    <property type="entry name" value="DMRL_synthase"/>
    <property type="match status" value="1"/>
</dbReference>
<dbReference type="SUPFAM" id="SSF52121">
    <property type="entry name" value="Lumazine synthase"/>
    <property type="match status" value="1"/>
</dbReference>
<gene>
    <name evidence="1" type="primary">ribH</name>
    <name type="ordered locus">CHY_1472</name>
</gene>
<evidence type="ECO:0000255" key="1">
    <source>
        <dbReference type="HAMAP-Rule" id="MF_00178"/>
    </source>
</evidence>
<comment type="function">
    <text evidence="1">Catalyzes the formation of 6,7-dimethyl-8-ribityllumazine by condensation of 5-amino-6-(D-ribitylamino)uracil with 3,4-dihydroxy-2-butanone 4-phosphate. This is the penultimate step in the biosynthesis of riboflavin.</text>
</comment>
<comment type="catalytic activity">
    <reaction evidence="1">
        <text>(2S)-2-hydroxy-3-oxobutyl phosphate + 5-amino-6-(D-ribitylamino)uracil = 6,7-dimethyl-8-(1-D-ribityl)lumazine + phosphate + 2 H2O + H(+)</text>
        <dbReference type="Rhea" id="RHEA:26152"/>
        <dbReference type="ChEBI" id="CHEBI:15377"/>
        <dbReference type="ChEBI" id="CHEBI:15378"/>
        <dbReference type="ChEBI" id="CHEBI:15934"/>
        <dbReference type="ChEBI" id="CHEBI:43474"/>
        <dbReference type="ChEBI" id="CHEBI:58201"/>
        <dbReference type="ChEBI" id="CHEBI:58830"/>
        <dbReference type="EC" id="2.5.1.78"/>
    </reaction>
</comment>
<comment type="pathway">
    <text evidence="1">Cofactor biosynthesis; riboflavin biosynthesis; riboflavin from 2-hydroxy-3-oxobutyl phosphate and 5-amino-6-(D-ribitylamino)uracil: step 1/2.</text>
</comment>
<comment type="similarity">
    <text evidence="1">Belongs to the DMRL synthase family.</text>
</comment>
<sequence>MQVFEGKLNGKGLKIGIIVSRFNEFITQKLLAGALDCLTRHEVENTNIDVIWVPGAFEIPLVAKRAVHKDYDAIICLGAVIRGATPHFDYVAAEVAKGIAAVGLEANKPVIFGVLTTDTIEQAIERAGTKAGNKGWEAALAAIEMANLFKKV</sequence>
<proteinExistence type="inferred from homology"/>
<feature type="chain" id="PRO_1000040394" description="6,7-dimethyl-8-ribityllumazine synthase">
    <location>
        <begin position="1"/>
        <end position="152"/>
    </location>
</feature>
<feature type="active site" description="Proton donor" evidence="1">
    <location>
        <position position="87"/>
    </location>
</feature>
<feature type="binding site" evidence="1">
    <location>
        <position position="22"/>
    </location>
    <ligand>
        <name>5-amino-6-(D-ribitylamino)uracil</name>
        <dbReference type="ChEBI" id="CHEBI:15934"/>
    </ligand>
</feature>
<feature type="binding site" evidence="1">
    <location>
        <begin position="56"/>
        <end position="58"/>
    </location>
    <ligand>
        <name>5-amino-6-(D-ribitylamino)uracil</name>
        <dbReference type="ChEBI" id="CHEBI:15934"/>
    </ligand>
</feature>
<feature type="binding site" evidence="1">
    <location>
        <begin position="79"/>
        <end position="81"/>
    </location>
    <ligand>
        <name>5-amino-6-(D-ribitylamino)uracil</name>
        <dbReference type="ChEBI" id="CHEBI:15934"/>
    </ligand>
</feature>
<feature type="binding site" evidence="1">
    <location>
        <begin position="84"/>
        <end position="85"/>
    </location>
    <ligand>
        <name>(2S)-2-hydroxy-3-oxobutyl phosphate</name>
        <dbReference type="ChEBI" id="CHEBI:58830"/>
    </ligand>
</feature>
<feature type="binding site" evidence="1">
    <location>
        <position position="112"/>
    </location>
    <ligand>
        <name>5-amino-6-(D-ribitylamino)uracil</name>
        <dbReference type="ChEBI" id="CHEBI:15934"/>
    </ligand>
</feature>
<feature type="binding site" evidence="1">
    <location>
        <position position="126"/>
    </location>
    <ligand>
        <name>(2S)-2-hydroxy-3-oxobutyl phosphate</name>
        <dbReference type="ChEBI" id="CHEBI:58830"/>
    </ligand>
</feature>
<organism>
    <name type="scientific">Carboxydothermus hydrogenoformans (strain ATCC BAA-161 / DSM 6008 / Z-2901)</name>
    <dbReference type="NCBI Taxonomy" id="246194"/>
    <lineage>
        <taxon>Bacteria</taxon>
        <taxon>Bacillati</taxon>
        <taxon>Bacillota</taxon>
        <taxon>Clostridia</taxon>
        <taxon>Thermoanaerobacterales</taxon>
        <taxon>Thermoanaerobacteraceae</taxon>
        <taxon>Carboxydothermus</taxon>
    </lineage>
</organism>
<accession>Q3AC30</accession>